<protein>
    <recommendedName>
        <fullName evidence="1">Glutamyl-tRNA(Gln) amidotransferase subunit B, mitochondrial</fullName>
        <shortName evidence="1">Glu-AdT subunit B</shortName>
        <ecNumber evidence="1">6.3.5.-</ecNumber>
    </recommendedName>
</protein>
<gene>
    <name type="ORF">BDCG_00769</name>
</gene>
<comment type="function">
    <text evidence="1">Allows the formation of correctly charged Gln-tRNA(Gln) through the transamidation of misacylated Glu-tRNA(Gln) in the mitochondria. The reaction takes place in the presence of glutamine and ATP through an activated gamma-phospho-Glu-tRNA(Gln).</text>
</comment>
<comment type="catalytic activity">
    <reaction evidence="1">
        <text>L-glutamyl-tRNA(Gln) + L-glutamine + ATP + H2O = L-glutaminyl-tRNA(Gln) + L-glutamate + ADP + phosphate + H(+)</text>
        <dbReference type="Rhea" id="RHEA:17521"/>
        <dbReference type="Rhea" id="RHEA-COMP:9681"/>
        <dbReference type="Rhea" id="RHEA-COMP:9684"/>
        <dbReference type="ChEBI" id="CHEBI:15377"/>
        <dbReference type="ChEBI" id="CHEBI:15378"/>
        <dbReference type="ChEBI" id="CHEBI:29985"/>
        <dbReference type="ChEBI" id="CHEBI:30616"/>
        <dbReference type="ChEBI" id="CHEBI:43474"/>
        <dbReference type="ChEBI" id="CHEBI:58359"/>
        <dbReference type="ChEBI" id="CHEBI:78520"/>
        <dbReference type="ChEBI" id="CHEBI:78521"/>
        <dbReference type="ChEBI" id="CHEBI:456216"/>
    </reaction>
</comment>
<comment type="subunit">
    <text evidence="1">Subunit of the heterotrimeric GatCAB amidotransferase (AdT) complex, composed of A, B and C subunits.</text>
</comment>
<comment type="subcellular location">
    <subcellularLocation>
        <location evidence="1">Mitochondrion</location>
    </subcellularLocation>
</comment>
<comment type="similarity">
    <text evidence="1">Belongs to the GatB/GatE family. GatB subfamily.</text>
</comment>
<comment type="sequence caution" evidence="3">
    <conflict type="erroneous initiation">
        <sequence resource="EMBL-CDS" id="EEQ83964"/>
    </conflict>
    <text>Extended N-terminus.</text>
</comment>
<organism>
    <name type="scientific">Ajellomyces dermatitidis (strain ER-3 / ATCC MYA-2586)</name>
    <name type="common">Blastomyces dermatitidis</name>
    <dbReference type="NCBI Taxonomy" id="559297"/>
    <lineage>
        <taxon>Eukaryota</taxon>
        <taxon>Fungi</taxon>
        <taxon>Dikarya</taxon>
        <taxon>Ascomycota</taxon>
        <taxon>Pezizomycotina</taxon>
        <taxon>Eurotiomycetes</taxon>
        <taxon>Eurotiomycetidae</taxon>
        <taxon>Onygenales</taxon>
        <taxon>Ajellomycetaceae</taxon>
        <taxon>Blastomyces</taxon>
    </lineage>
</organism>
<accession>C5G7E1</accession>
<feature type="transit peptide" description="Mitochondrion" evidence="1">
    <location>
        <begin position="1"/>
        <end position="48"/>
    </location>
</feature>
<feature type="chain" id="PRO_0000413240" description="Glutamyl-tRNA(Gln) amidotransferase subunit B, mitochondrial">
    <location>
        <begin position="49"/>
        <end position="604"/>
    </location>
</feature>
<feature type="region of interest" description="Disordered" evidence="2">
    <location>
        <begin position="28"/>
        <end position="57"/>
    </location>
</feature>
<feature type="compositionally biased region" description="Polar residues" evidence="2">
    <location>
        <begin position="33"/>
        <end position="46"/>
    </location>
</feature>
<keyword id="KW-0067">ATP-binding</keyword>
<keyword id="KW-0436">Ligase</keyword>
<keyword id="KW-0496">Mitochondrion</keyword>
<keyword id="KW-0547">Nucleotide-binding</keyword>
<keyword id="KW-0648">Protein biosynthesis</keyword>
<keyword id="KW-0809">Transit peptide</keyword>
<evidence type="ECO:0000255" key="1">
    <source>
        <dbReference type="HAMAP-Rule" id="MF_03147"/>
    </source>
</evidence>
<evidence type="ECO:0000256" key="2">
    <source>
        <dbReference type="SAM" id="MobiDB-lite"/>
    </source>
</evidence>
<evidence type="ECO:0000305" key="3"/>
<dbReference type="EC" id="6.3.5.-" evidence="1"/>
<dbReference type="EMBL" id="EQ999973">
    <property type="protein sequence ID" value="EEQ83964.2"/>
    <property type="status" value="ALT_INIT"/>
    <property type="molecule type" value="Genomic_DNA"/>
</dbReference>
<dbReference type="SMR" id="C5G7E1"/>
<dbReference type="STRING" id="559297.C5G7E1"/>
<dbReference type="eggNOG" id="KOG2438">
    <property type="taxonomic scope" value="Eukaryota"/>
</dbReference>
<dbReference type="HOGENOM" id="CLU_019240_4_1_1"/>
<dbReference type="GO" id="GO:0030956">
    <property type="term" value="C:glutamyl-tRNA(Gln) amidotransferase complex"/>
    <property type="evidence" value="ECO:0007669"/>
    <property type="project" value="UniProtKB-UniRule"/>
</dbReference>
<dbReference type="GO" id="GO:0005739">
    <property type="term" value="C:mitochondrion"/>
    <property type="evidence" value="ECO:0007669"/>
    <property type="project" value="UniProtKB-SubCell"/>
</dbReference>
<dbReference type="GO" id="GO:0005524">
    <property type="term" value="F:ATP binding"/>
    <property type="evidence" value="ECO:0007669"/>
    <property type="project" value="UniProtKB-KW"/>
</dbReference>
<dbReference type="GO" id="GO:0050567">
    <property type="term" value="F:glutaminyl-tRNA synthase (glutamine-hydrolyzing) activity"/>
    <property type="evidence" value="ECO:0007669"/>
    <property type="project" value="UniProtKB-UniRule"/>
</dbReference>
<dbReference type="GO" id="GO:0070681">
    <property type="term" value="P:glutaminyl-tRNAGln biosynthesis via transamidation"/>
    <property type="evidence" value="ECO:0007669"/>
    <property type="project" value="UniProtKB-UniRule"/>
</dbReference>
<dbReference type="GO" id="GO:0032543">
    <property type="term" value="P:mitochondrial translation"/>
    <property type="evidence" value="ECO:0007669"/>
    <property type="project" value="UniProtKB-UniRule"/>
</dbReference>
<dbReference type="Gene3D" id="1.10.10.410">
    <property type="match status" value="1"/>
</dbReference>
<dbReference type="HAMAP" id="MF_00121">
    <property type="entry name" value="GatB"/>
    <property type="match status" value="1"/>
</dbReference>
<dbReference type="InterPro" id="IPR017959">
    <property type="entry name" value="Asn/Gln-tRNA_amidoTrfase_suB/E"/>
</dbReference>
<dbReference type="InterPro" id="IPR006075">
    <property type="entry name" value="Asn/Gln-tRNA_Trfase_suB/E_cat"/>
</dbReference>
<dbReference type="InterPro" id="IPR018027">
    <property type="entry name" value="Asn/Gln_amidotransferase"/>
</dbReference>
<dbReference type="InterPro" id="IPR003789">
    <property type="entry name" value="Asn/Gln_tRNA_amidoTrase-B-like"/>
</dbReference>
<dbReference type="InterPro" id="IPR004413">
    <property type="entry name" value="GatB"/>
</dbReference>
<dbReference type="InterPro" id="IPR023168">
    <property type="entry name" value="GatB_Yqey_C_2"/>
</dbReference>
<dbReference type="InterPro" id="IPR017958">
    <property type="entry name" value="Gln-tRNA_amidoTrfase_suB_CS"/>
</dbReference>
<dbReference type="InterPro" id="IPR014746">
    <property type="entry name" value="Gln_synth/guanido_kin_cat_dom"/>
</dbReference>
<dbReference type="NCBIfam" id="TIGR00133">
    <property type="entry name" value="gatB"/>
    <property type="match status" value="1"/>
</dbReference>
<dbReference type="NCBIfam" id="NF004012">
    <property type="entry name" value="PRK05477.1-2"/>
    <property type="match status" value="1"/>
</dbReference>
<dbReference type="PANTHER" id="PTHR11659">
    <property type="entry name" value="GLUTAMYL-TRNA GLN AMIDOTRANSFERASE SUBUNIT B MITOCHONDRIAL AND PROKARYOTIC PET112-RELATED"/>
    <property type="match status" value="1"/>
</dbReference>
<dbReference type="PANTHER" id="PTHR11659:SF0">
    <property type="entry name" value="GLUTAMYL-TRNA(GLN) AMIDOTRANSFERASE SUBUNIT B, MITOCHONDRIAL"/>
    <property type="match status" value="1"/>
</dbReference>
<dbReference type="Pfam" id="PF02934">
    <property type="entry name" value="GatB_N"/>
    <property type="match status" value="1"/>
</dbReference>
<dbReference type="Pfam" id="PF02637">
    <property type="entry name" value="GatB_Yqey"/>
    <property type="match status" value="1"/>
</dbReference>
<dbReference type="SMART" id="SM00845">
    <property type="entry name" value="GatB_Yqey"/>
    <property type="match status" value="1"/>
</dbReference>
<dbReference type="SUPFAM" id="SSF89095">
    <property type="entry name" value="GatB/YqeY motif"/>
    <property type="match status" value="1"/>
</dbReference>
<dbReference type="SUPFAM" id="SSF55931">
    <property type="entry name" value="Glutamine synthetase/guanido kinase"/>
    <property type="match status" value="1"/>
</dbReference>
<dbReference type="PROSITE" id="PS01234">
    <property type="entry name" value="GATB"/>
    <property type="match status" value="1"/>
</dbReference>
<sequence length="604" mass="67370">MIRQCLSRRGAYSRYRLAARGVELAEPFHHQSSRPQGRRNWSSSPRCSLDIRTDTPRSRSEYVPLRKQLKEEAKAKRAAKRKGSAPPAKHDDWELTVGIEIHAQLDTDAKLFSRASAAIDDIPNSNVALFDIALPGSQPLFQPSTLIPALRAALAMNCDIQRVSRFDRKHYFYQDQPAGYQITQYYEPYAKNGSIWLQEHDGIAREDGEGVQIGIKQIQMEQDTAKSQELPSSTYLLDFNRVSRPLIEIITLPQIHSPATAAACVRKIQAILQSVGAVTTGMEMGGLRADVNVSVRKRSEEAGDHEYHGIVGLGQRTEIKNLSSFKAVEDAIIAERDRQIAVLEAGGTIEGETRGWTLGSTETRKLRGKEGEVDYRYMPDPDLGPVVIGEDVICDLQMKMPLLPDALFQMLVRNPKYKLSTADAKTMIELDDGQRLEYYQDVVDILIGLQTDLSADFSGGKAVGNWVLHELGGLLTKSSLPWDSGRVPAQSLAEIIDLLSRKEITSSSAKSLLAMVFDGDKRSVAQIVEDENLRFQSLSRGEYIALAEEVMRQNPKMVSEIREKGQLGKIGWFVGQIKRIGDANRVEAQKAEEILRELILKKNS</sequence>
<name>GATB_AJEDR</name>
<reference key="1">
    <citation type="journal article" date="2015" name="PLoS Genet.">
        <title>The dynamic genome and transcriptome of the human fungal pathogen Blastomyces and close relative Emmonsia.</title>
        <authorList>
            <person name="Munoz J.F."/>
            <person name="Gauthier G.M."/>
            <person name="Desjardins C.A."/>
            <person name="Gallo J.E."/>
            <person name="Holder J."/>
            <person name="Sullivan T.D."/>
            <person name="Marty A.J."/>
            <person name="Carmen J.C."/>
            <person name="Chen Z."/>
            <person name="Ding L."/>
            <person name="Gujja S."/>
            <person name="Magrini V."/>
            <person name="Misas E."/>
            <person name="Mitreva M."/>
            <person name="Priest M."/>
            <person name="Saif S."/>
            <person name="Whiston E.A."/>
            <person name="Young S."/>
            <person name="Zeng Q."/>
            <person name="Goldman W.E."/>
            <person name="Mardis E.R."/>
            <person name="Taylor J.W."/>
            <person name="McEwen J.G."/>
            <person name="Clay O.K."/>
            <person name="Klein B.S."/>
            <person name="Cuomo C.A."/>
        </authorList>
    </citation>
    <scope>NUCLEOTIDE SEQUENCE [LARGE SCALE GENOMIC DNA]</scope>
    <source>
        <strain>ER-3 / ATCC MYA-2586</strain>
    </source>
</reference>
<proteinExistence type="inferred from homology"/>